<dbReference type="EMBL" id="AB105180">
    <property type="protein sequence ID" value="BAD02424.1"/>
    <property type="molecule type" value="Genomic_DNA"/>
</dbReference>
<dbReference type="SMR" id="Q76FF5"/>
<dbReference type="EnsemblMetazoa" id="XM_043785556.1">
    <property type="protein sequence ID" value="XP_043641491.1"/>
    <property type="gene ID" value="LOC122612140"/>
</dbReference>
<dbReference type="EnsemblMetazoa" id="XM_043785560.1">
    <property type="protein sequence ID" value="XP_043641495.1"/>
    <property type="gene ID" value="LOC122612141"/>
</dbReference>
<dbReference type="EnsemblMetazoa" id="XM_043785830.1">
    <property type="protein sequence ID" value="XP_043641765.1"/>
    <property type="gene ID" value="LOC122612311"/>
</dbReference>
<dbReference type="EnsemblMetazoa" id="XM_043785831.1">
    <property type="protein sequence ID" value="XP_043641766.1"/>
    <property type="gene ID" value="LOC122612312"/>
</dbReference>
<dbReference type="EnsemblMetazoa" id="XM_043786104.1">
    <property type="protein sequence ID" value="XP_043642039.1"/>
    <property type="gene ID" value="LOC122612460"/>
</dbReference>
<dbReference type="EnsemblMetazoa" id="XM_043786105.1">
    <property type="protein sequence ID" value="XP_043642040.1"/>
    <property type="gene ID" value="LOC122612461"/>
</dbReference>
<dbReference type="EnsemblMetazoa" id="XM_043786389.1">
    <property type="protein sequence ID" value="XP_043642324.1"/>
    <property type="gene ID" value="LOC122612644"/>
</dbReference>
<dbReference type="EnsemblMetazoa" id="XM_043789455.1">
    <property type="protein sequence ID" value="XP_043645390.1"/>
    <property type="gene ID" value="LOC122614797"/>
</dbReference>
<dbReference type="EnsemblMetazoa" id="XM_043799764.1">
    <property type="protein sequence ID" value="XP_043655699.1"/>
    <property type="gene ID" value="LOC122621787"/>
</dbReference>
<dbReference type="GO" id="GO:0000786">
    <property type="term" value="C:nucleosome"/>
    <property type="evidence" value="ECO:0000250"/>
    <property type="project" value="UniProtKB"/>
</dbReference>
<dbReference type="GO" id="GO:0005634">
    <property type="term" value="C:nucleus"/>
    <property type="evidence" value="ECO:0007669"/>
    <property type="project" value="UniProtKB-SubCell"/>
</dbReference>
<dbReference type="GO" id="GO:0003677">
    <property type="term" value="F:DNA binding"/>
    <property type="evidence" value="ECO:0000250"/>
    <property type="project" value="UniProtKB"/>
</dbReference>
<dbReference type="GO" id="GO:0046982">
    <property type="term" value="F:protein heterodimerization activity"/>
    <property type="evidence" value="ECO:0007669"/>
    <property type="project" value="InterPro"/>
</dbReference>
<dbReference type="GO" id="GO:0030527">
    <property type="term" value="F:structural constituent of chromatin"/>
    <property type="evidence" value="ECO:0007669"/>
    <property type="project" value="InterPro"/>
</dbReference>
<dbReference type="GO" id="GO:0006334">
    <property type="term" value="P:nucleosome assembly"/>
    <property type="evidence" value="ECO:0000250"/>
    <property type="project" value="UniProtKB"/>
</dbReference>
<dbReference type="CDD" id="cd22912">
    <property type="entry name" value="HFD_H4"/>
    <property type="match status" value="1"/>
</dbReference>
<dbReference type="FunFam" id="1.10.20.10:FF:000002">
    <property type="entry name" value="Histone H4"/>
    <property type="match status" value="1"/>
</dbReference>
<dbReference type="Gene3D" id="1.10.20.10">
    <property type="entry name" value="Histone, subunit A"/>
    <property type="match status" value="1"/>
</dbReference>
<dbReference type="InterPro" id="IPR035425">
    <property type="entry name" value="CENP-T/H4_C"/>
</dbReference>
<dbReference type="InterPro" id="IPR009072">
    <property type="entry name" value="Histone-fold"/>
</dbReference>
<dbReference type="InterPro" id="IPR001951">
    <property type="entry name" value="Histone_H4"/>
</dbReference>
<dbReference type="InterPro" id="IPR019809">
    <property type="entry name" value="Histone_H4_CS"/>
</dbReference>
<dbReference type="InterPro" id="IPR004823">
    <property type="entry name" value="TAF_TATA-bd_Histone-like_dom"/>
</dbReference>
<dbReference type="PANTHER" id="PTHR10484">
    <property type="entry name" value="HISTONE H4"/>
    <property type="match status" value="1"/>
</dbReference>
<dbReference type="Pfam" id="PF15511">
    <property type="entry name" value="CENP-T_C"/>
    <property type="match status" value="1"/>
</dbReference>
<dbReference type="PRINTS" id="PR00623">
    <property type="entry name" value="HISTONEH4"/>
</dbReference>
<dbReference type="SMART" id="SM00417">
    <property type="entry name" value="H4"/>
    <property type="match status" value="1"/>
</dbReference>
<dbReference type="SMART" id="SM00803">
    <property type="entry name" value="TAF"/>
    <property type="match status" value="1"/>
</dbReference>
<dbReference type="SUPFAM" id="SSF47113">
    <property type="entry name" value="Histone-fold"/>
    <property type="match status" value="1"/>
</dbReference>
<dbReference type="PROSITE" id="PS00047">
    <property type="entry name" value="HISTONE_H4"/>
    <property type="match status" value="1"/>
</dbReference>
<reference key="1">
    <citation type="journal article" date="2003" name="Genes Genet. Syst.">
        <title>Divergence and heterogeneity of the histone gene repeating units in the Drosophila melanogaster species subgroup.</title>
        <authorList>
            <person name="Kakita M."/>
            <person name="Shimizu T."/>
            <person name="Emoto M."/>
            <person name="Nagai M."/>
            <person name="Takeguchi M."/>
            <person name="Hosono Y."/>
            <person name="Kume N."/>
            <person name="Ozawa T."/>
            <person name="Ueda M."/>
            <person name="Bhuiyan M.S."/>
            <person name="Matsuo Y."/>
        </authorList>
    </citation>
    <scope>NUCLEOTIDE SEQUENCE [GENOMIC DNA]</scope>
</reference>
<keyword id="KW-0007">Acetylation</keyword>
<keyword id="KW-0158">Chromosome</keyword>
<keyword id="KW-0238">DNA-binding</keyword>
<keyword id="KW-0488">Methylation</keyword>
<keyword id="KW-0544">Nucleosome core</keyword>
<keyword id="KW-0539">Nucleus</keyword>
<keyword id="KW-0597">Phosphoprotein</keyword>
<gene>
    <name type="primary">His4</name>
    <name type="synonym">H4</name>
</gene>
<protein>
    <recommendedName>
        <fullName>Histone H4</fullName>
    </recommendedName>
</protein>
<name>H4_DROTE</name>
<sequence length="103" mass="11381">MTGRGKGGKGLGKGGAKRHRKVLRDNIQGITKPAIRRLARRGGVKRISGLIYEETRGVLKVFLENVIRDAVTYTEHAKRKTVTAMDVVYALKRQGRTLYGFGG</sequence>
<organism>
    <name type="scientific">Drosophila teissieri</name>
    <name type="common">Fruit fly</name>
    <dbReference type="NCBI Taxonomy" id="7243"/>
    <lineage>
        <taxon>Eukaryota</taxon>
        <taxon>Metazoa</taxon>
        <taxon>Ecdysozoa</taxon>
        <taxon>Arthropoda</taxon>
        <taxon>Hexapoda</taxon>
        <taxon>Insecta</taxon>
        <taxon>Pterygota</taxon>
        <taxon>Neoptera</taxon>
        <taxon>Endopterygota</taxon>
        <taxon>Diptera</taxon>
        <taxon>Brachycera</taxon>
        <taxon>Muscomorpha</taxon>
        <taxon>Ephydroidea</taxon>
        <taxon>Drosophilidae</taxon>
        <taxon>Drosophila</taxon>
        <taxon>Sophophora</taxon>
    </lineage>
</organism>
<proteinExistence type="inferred from homology"/>
<evidence type="ECO:0000250" key="1"/>
<evidence type="ECO:0000250" key="2">
    <source>
        <dbReference type="UniProtKB" id="P62805"/>
    </source>
</evidence>
<evidence type="ECO:0000250" key="3">
    <source>
        <dbReference type="UniProtKB" id="P84040"/>
    </source>
</evidence>
<evidence type="ECO:0000256" key="4">
    <source>
        <dbReference type="SAM" id="MobiDB-lite"/>
    </source>
</evidence>
<evidence type="ECO:0000305" key="5"/>
<comment type="function">
    <text>Core component of nucleosome. Nucleosomes wrap and compact DNA into chromatin, limiting DNA accessibility to the cellular machineries which require DNA as a template. Histones thereby play a central role in transcription regulation, DNA repair, DNA replication and chromosomal stability. DNA accessibility is regulated via a complex set of post-translational modifications of histones, also called histone code, and nucleosome remodeling.</text>
</comment>
<comment type="subunit">
    <text>The nucleosome is a histone octamer containing two molecules each of H2A, H2B, H3 and H4 assembled in one H3-H4 heterotetramer and two H2A-H2B heterodimers. The octamer wraps approximately 147 bp of DNA.</text>
</comment>
<comment type="subcellular location">
    <subcellularLocation>
        <location evidence="1">Nucleus</location>
    </subcellularLocation>
    <subcellularLocation>
        <location evidence="1">Chromosome</location>
    </subcellularLocation>
</comment>
<comment type="PTM">
    <text evidence="3">Acetylated on Lys-6 (H4K5ac) and Lys-13 (H4K12ac) during prophase I of meiosis. Phosphorylation of H2A 'Thr-119' is a prerequisite for H4 Lys-6 acetylation but not for H4 Lys-13 acetylation. Acetylated on Lys-6 and Lys-13 by the Ada2a-containing (ATAC) histone acetyltransferase complex.</text>
</comment>
<comment type="similarity">
    <text evidence="5">Belongs to the histone H4 family.</text>
</comment>
<accession>Q76FF5</accession>
<feature type="initiator methionine" description="Removed" evidence="1">
    <location>
        <position position="1"/>
    </location>
</feature>
<feature type="chain" id="PRO_0000158309" description="Histone H4">
    <location>
        <begin position="2"/>
        <end position="103"/>
    </location>
</feature>
<feature type="DNA-binding region">
    <location>
        <begin position="17"/>
        <end position="21"/>
    </location>
</feature>
<feature type="region of interest" description="Disordered" evidence="4">
    <location>
        <begin position="1"/>
        <end position="20"/>
    </location>
</feature>
<feature type="compositionally biased region" description="Gly residues" evidence="4">
    <location>
        <begin position="1"/>
        <end position="14"/>
    </location>
</feature>
<feature type="modified residue" description="N6-acetyl-N6-methyllysine; alternate" evidence="2">
    <location>
        <position position="6"/>
    </location>
</feature>
<feature type="modified residue" description="N6-acetyllysine" evidence="3">
    <location>
        <position position="6"/>
    </location>
</feature>
<feature type="modified residue" description="N6-acetyl-N6-methyllysine; alternate" evidence="2">
    <location>
        <position position="13"/>
    </location>
</feature>
<feature type="modified residue" description="N6-acetyllysine" evidence="3">
    <location>
        <position position="13"/>
    </location>
</feature>
<feature type="modified residue" description="N6-succinyllysine" evidence="3">
    <location>
        <position position="32"/>
    </location>
</feature>
<feature type="modified residue" description="N6-succinyllysine" evidence="3">
    <location>
        <position position="78"/>
    </location>
</feature>
<feature type="modified residue" description="N6-succinyllysine" evidence="3">
    <location>
        <position position="80"/>
    </location>
</feature>
<feature type="modified residue" description="Phosphothreonine" evidence="3">
    <location>
        <position position="81"/>
    </location>
</feature>
<feature type="modified residue" description="Phosphothreonine" evidence="3">
    <location>
        <position position="83"/>
    </location>
</feature>
<feature type="modified residue" description="N6-succinyllysine" evidence="3">
    <location>
        <position position="92"/>
    </location>
</feature>